<feature type="signal peptide" evidence="2">
    <location>
        <begin position="1"/>
        <end position="23"/>
    </location>
</feature>
<feature type="peptide" id="PRO_0000428701" description="Peptide Ctri9194">
    <location>
        <begin position="24"/>
        <end position="38"/>
    </location>
</feature>
<feature type="propeptide" id="PRO_0000428702" evidence="1">
    <location>
        <begin position="42"/>
        <end position="72"/>
    </location>
</feature>
<feature type="modified residue" description="Isoleucine amide" evidence="1">
    <location>
        <position position="38"/>
    </location>
</feature>
<name>NDB4V_CHATC</name>
<dbReference type="GO" id="GO:0005576">
    <property type="term" value="C:extracellular region"/>
    <property type="evidence" value="ECO:0007669"/>
    <property type="project" value="UniProtKB-SubCell"/>
</dbReference>
<dbReference type="GO" id="GO:0050688">
    <property type="term" value="P:regulation of defense response to virus"/>
    <property type="evidence" value="ECO:0007669"/>
    <property type="project" value="UniProtKB-KW"/>
</dbReference>
<accession>P0DMF5</accession>
<sequence>MKTQNVLLSFGIVFLMISFSSETYIRDFITRRPPFGNIGKRSLKDVESLDFLFDPTFTAADLAVLENALEDY</sequence>
<proteinExistence type="inferred from homology"/>
<protein>
    <recommendedName>
        <fullName evidence="3">Peptide Ctri9194</fullName>
    </recommendedName>
</protein>
<organism>
    <name type="scientific">Chaerilus tricostatus</name>
    <name type="common">Scorpion</name>
    <dbReference type="NCBI Taxonomy" id="1055734"/>
    <lineage>
        <taxon>Eukaryota</taxon>
        <taxon>Metazoa</taxon>
        <taxon>Ecdysozoa</taxon>
        <taxon>Arthropoda</taxon>
        <taxon>Chelicerata</taxon>
        <taxon>Arachnida</taxon>
        <taxon>Scorpiones</taxon>
        <taxon>Chaerilida</taxon>
        <taxon>Chaeriloidea</taxon>
        <taxon>Chaerilidae</taxon>
        <taxon>Chaerilus</taxon>
    </lineage>
</organism>
<keyword id="KW-0027">Amidation</keyword>
<keyword id="KW-0929">Antimicrobial</keyword>
<keyword id="KW-0930">Antiviral protein</keyword>
<keyword id="KW-0964">Secreted</keyword>
<keyword id="KW-0732">Signal</keyword>
<reference key="1">
    <citation type="journal article" date="2013" name="Biomaterials">
        <title>Design of histidine-rich peptides with enhanced bioavailability and inhibitory activity against hepatitis C virus.</title>
        <authorList>
            <person name="Hong W."/>
            <person name="Zhang R."/>
            <person name="Di Z."/>
            <person name="He Y."/>
            <person name="Zhao Z."/>
            <person name="Hu J."/>
            <person name="Wu Y."/>
            <person name="Li W."/>
            <person name="Cao Z."/>
        </authorList>
    </citation>
    <scope>NUCLEOTIDE SEQUENCE [MRNA]</scope>
    <scope>SYNTHESIS OF 24-38</scope>
    <source>
        <tissue>Venom gland</tissue>
    </source>
</reference>
<evidence type="ECO:0000250" key="1"/>
<evidence type="ECO:0000255" key="2"/>
<evidence type="ECO:0000303" key="3">
    <source>
    </source>
</evidence>
<evidence type="ECO:0000305" key="4"/>
<evidence type="ECO:0000305" key="5">
    <source>
    </source>
</evidence>
<comment type="function">
    <text evidence="1">Antimicrobial peptide.</text>
</comment>
<comment type="subcellular location">
    <subcellularLocation>
        <location evidence="1">Secreted</location>
    </subcellularLocation>
</comment>
<comment type="tissue specificity">
    <text evidence="4">Expressed by the venom gland.</text>
</comment>
<comment type="miscellaneous">
    <text evidence="5">Shows a low ability to inhibit hepatitis C virus (HCV) infection in Huh7.5.1 cells.</text>
</comment>
<comment type="similarity">
    <text evidence="4">Belongs to the non-disulfide-bridged peptide (NDBP) superfamily. Short antimicrobial peptide (group 4) family.</text>
</comment>